<accession>P45036</accession>
<feature type="chain" id="PRO_0000201578" description="Cytochrome c-type biogenesis protein CcmE">
    <location>
        <begin position="1"/>
        <end position="173"/>
    </location>
</feature>
<feature type="topological domain" description="Cytoplasmic" evidence="1">
    <location>
        <begin position="1"/>
        <end position="8"/>
    </location>
</feature>
<feature type="transmembrane region" description="Helical; Signal-anchor for type II membrane protein" evidence="1">
    <location>
        <begin position="9"/>
        <end position="29"/>
    </location>
</feature>
<feature type="topological domain" description="Periplasmic" evidence="1">
    <location>
        <begin position="30"/>
        <end position="173"/>
    </location>
</feature>
<feature type="region of interest" description="Disordered" evidence="2">
    <location>
        <begin position="152"/>
        <end position="173"/>
    </location>
</feature>
<feature type="compositionally biased region" description="Basic and acidic residues" evidence="2">
    <location>
        <begin position="156"/>
        <end position="173"/>
    </location>
</feature>
<feature type="binding site" description="covalent" evidence="1">
    <location>
        <position position="131"/>
    </location>
    <ligand>
        <name>heme</name>
        <dbReference type="ChEBI" id="CHEBI:30413"/>
    </ligand>
</feature>
<feature type="binding site" description="axial binding residue" evidence="1">
    <location>
        <position position="135"/>
    </location>
    <ligand>
        <name>heme</name>
        <dbReference type="ChEBI" id="CHEBI:30413"/>
    </ligand>
    <ligandPart>
        <name>Fe</name>
        <dbReference type="ChEBI" id="CHEBI:18248"/>
    </ligandPart>
</feature>
<proteinExistence type="inferred from homology"/>
<keyword id="KW-0997">Cell inner membrane</keyword>
<keyword id="KW-1003">Cell membrane</keyword>
<keyword id="KW-0201">Cytochrome c-type biogenesis</keyword>
<keyword id="KW-0349">Heme</keyword>
<keyword id="KW-0408">Iron</keyword>
<keyword id="KW-0472">Membrane</keyword>
<keyword id="KW-0479">Metal-binding</keyword>
<keyword id="KW-1185">Reference proteome</keyword>
<keyword id="KW-0735">Signal-anchor</keyword>
<keyword id="KW-0812">Transmembrane</keyword>
<keyword id="KW-1133">Transmembrane helix</keyword>
<comment type="function">
    <text evidence="1">Heme chaperone required for the biogenesis of c-type cytochromes. Transiently binds heme delivered by CcmC and transfers the heme to apo-cytochromes in a process facilitated by CcmF and CcmH.</text>
</comment>
<comment type="subcellular location">
    <subcellularLocation>
        <location evidence="1">Cell inner membrane</location>
        <topology evidence="1">Single-pass type II membrane protein</topology>
        <orientation evidence="1">Periplasmic side</orientation>
    </subcellularLocation>
</comment>
<comment type="similarity">
    <text evidence="1">Belongs to the CcmE/CycJ family.</text>
</comment>
<reference key="1">
    <citation type="journal article" date="1995" name="Science">
        <title>Whole-genome random sequencing and assembly of Haemophilus influenzae Rd.</title>
        <authorList>
            <person name="Fleischmann R.D."/>
            <person name="Adams M.D."/>
            <person name="White O."/>
            <person name="Clayton R.A."/>
            <person name="Kirkness E.F."/>
            <person name="Kerlavage A.R."/>
            <person name="Bult C.J."/>
            <person name="Tomb J.-F."/>
            <person name="Dougherty B.A."/>
            <person name="Merrick J.M."/>
            <person name="McKenney K."/>
            <person name="Sutton G.G."/>
            <person name="FitzHugh W."/>
            <person name="Fields C.A."/>
            <person name="Gocayne J.D."/>
            <person name="Scott J.D."/>
            <person name="Shirley R."/>
            <person name="Liu L.-I."/>
            <person name="Glodek A."/>
            <person name="Kelley J.M."/>
            <person name="Weidman J.F."/>
            <person name="Phillips C.A."/>
            <person name="Spriggs T."/>
            <person name="Hedblom E."/>
            <person name="Cotton M.D."/>
            <person name="Utterback T.R."/>
            <person name="Hanna M.C."/>
            <person name="Nguyen D.T."/>
            <person name="Saudek D.M."/>
            <person name="Brandon R.C."/>
            <person name="Fine L.D."/>
            <person name="Fritchman J.L."/>
            <person name="Fuhrmann J.L."/>
            <person name="Geoghagen N.S.M."/>
            <person name="Gnehm C.L."/>
            <person name="McDonald L.A."/>
            <person name="Small K.V."/>
            <person name="Fraser C.M."/>
            <person name="Smith H.O."/>
            <person name="Venter J.C."/>
        </authorList>
    </citation>
    <scope>NUCLEOTIDE SEQUENCE [LARGE SCALE GENOMIC DNA]</scope>
    <source>
        <strain>ATCC 51907 / DSM 11121 / KW20 / Rd</strain>
    </source>
</reference>
<name>CCME_HAEIN</name>
<organism>
    <name type="scientific">Haemophilus influenzae (strain ATCC 51907 / DSM 11121 / KW20 / Rd)</name>
    <dbReference type="NCBI Taxonomy" id="71421"/>
    <lineage>
        <taxon>Bacteria</taxon>
        <taxon>Pseudomonadati</taxon>
        <taxon>Pseudomonadota</taxon>
        <taxon>Gammaproteobacteria</taxon>
        <taxon>Pasteurellales</taxon>
        <taxon>Pasteurellaceae</taxon>
        <taxon>Haemophilus</taxon>
    </lineage>
</organism>
<sequence length="173" mass="19149">MNPRRKSRFKLVIFVVLGIAIASGLMLYALRQNIDLFYTPSEVIQGKDNNPNQKPEVGQRIRVGGMVVEGTVVRDPKSLKVRFDLNDIGPAITVEYEGILPDLFREGQGIVAQGVLTQPTVLTATEVLAKHDENYVPPELGEKMQKVHKPMGIEAADLKGESARDRQEKEGAK</sequence>
<gene>
    <name evidence="1" type="primary">ccmE</name>
    <name evidence="1" type="synonym">cycJ</name>
    <name type="ordered locus">HI_1093</name>
</gene>
<protein>
    <recommendedName>
        <fullName evidence="1">Cytochrome c-type biogenesis protein CcmE</fullName>
    </recommendedName>
    <alternativeName>
        <fullName evidence="1">Cytochrome c maturation protein E</fullName>
    </alternativeName>
    <alternativeName>
        <fullName evidence="1">Heme chaperone CcmE</fullName>
    </alternativeName>
</protein>
<evidence type="ECO:0000255" key="1">
    <source>
        <dbReference type="HAMAP-Rule" id="MF_01959"/>
    </source>
</evidence>
<evidence type="ECO:0000256" key="2">
    <source>
        <dbReference type="SAM" id="MobiDB-lite"/>
    </source>
</evidence>
<dbReference type="EMBL" id="L42023">
    <property type="protein sequence ID" value="AAC22750.1"/>
    <property type="molecule type" value="Genomic_DNA"/>
</dbReference>
<dbReference type="PIR" id="I64166">
    <property type="entry name" value="I64166"/>
</dbReference>
<dbReference type="RefSeq" id="NP_439250.1">
    <property type="nucleotide sequence ID" value="NC_000907.1"/>
</dbReference>
<dbReference type="SMR" id="P45036"/>
<dbReference type="STRING" id="71421.HI_1093"/>
<dbReference type="EnsemblBacteria" id="AAC22750">
    <property type="protein sequence ID" value="AAC22750"/>
    <property type="gene ID" value="HI_1093"/>
</dbReference>
<dbReference type="KEGG" id="hin:HI_1093"/>
<dbReference type="PATRIC" id="fig|71421.8.peg.1138"/>
<dbReference type="eggNOG" id="COG2332">
    <property type="taxonomic scope" value="Bacteria"/>
</dbReference>
<dbReference type="HOGENOM" id="CLU_079503_1_0_6"/>
<dbReference type="OrthoDB" id="9793584at2"/>
<dbReference type="PhylomeDB" id="P45036"/>
<dbReference type="BioCyc" id="HINF71421:G1GJ1-1128-MONOMER"/>
<dbReference type="Proteomes" id="UP000000579">
    <property type="component" value="Chromosome"/>
</dbReference>
<dbReference type="GO" id="GO:0005886">
    <property type="term" value="C:plasma membrane"/>
    <property type="evidence" value="ECO:0007669"/>
    <property type="project" value="UniProtKB-SubCell"/>
</dbReference>
<dbReference type="GO" id="GO:0020037">
    <property type="term" value="F:heme binding"/>
    <property type="evidence" value="ECO:0007669"/>
    <property type="project" value="InterPro"/>
</dbReference>
<dbReference type="GO" id="GO:0046872">
    <property type="term" value="F:metal ion binding"/>
    <property type="evidence" value="ECO:0007669"/>
    <property type="project" value="UniProtKB-KW"/>
</dbReference>
<dbReference type="GO" id="GO:0017004">
    <property type="term" value="P:cytochrome complex assembly"/>
    <property type="evidence" value="ECO:0007669"/>
    <property type="project" value="UniProtKB-KW"/>
</dbReference>
<dbReference type="FunFam" id="2.40.50.140:FF:000104">
    <property type="entry name" value="Cytochrome c-type biogenesis protein CcmE"/>
    <property type="match status" value="1"/>
</dbReference>
<dbReference type="Gene3D" id="2.40.50.140">
    <property type="entry name" value="Nucleic acid-binding proteins"/>
    <property type="match status" value="1"/>
</dbReference>
<dbReference type="HAMAP" id="MF_01959">
    <property type="entry name" value="CcmE"/>
    <property type="match status" value="1"/>
</dbReference>
<dbReference type="InterPro" id="IPR004329">
    <property type="entry name" value="CcmE"/>
</dbReference>
<dbReference type="InterPro" id="IPR036127">
    <property type="entry name" value="CcmE-like_sf"/>
</dbReference>
<dbReference type="InterPro" id="IPR012340">
    <property type="entry name" value="NA-bd_OB-fold"/>
</dbReference>
<dbReference type="NCBIfam" id="NF009638">
    <property type="entry name" value="PRK13165.1"/>
    <property type="match status" value="1"/>
</dbReference>
<dbReference type="NCBIfam" id="NF009727">
    <property type="entry name" value="PRK13254.1-1"/>
    <property type="match status" value="1"/>
</dbReference>
<dbReference type="NCBIfam" id="NF009729">
    <property type="entry name" value="PRK13254.1-3"/>
    <property type="match status" value="1"/>
</dbReference>
<dbReference type="PANTHER" id="PTHR34128">
    <property type="entry name" value="CYTOCHROME C-TYPE BIOGENESIS PROTEIN CCME HOMOLOG, MITOCHONDRIAL"/>
    <property type="match status" value="1"/>
</dbReference>
<dbReference type="PANTHER" id="PTHR34128:SF2">
    <property type="entry name" value="CYTOCHROME C-TYPE BIOGENESIS PROTEIN CCME HOMOLOG, MITOCHONDRIAL"/>
    <property type="match status" value="1"/>
</dbReference>
<dbReference type="Pfam" id="PF03100">
    <property type="entry name" value="CcmE"/>
    <property type="match status" value="1"/>
</dbReference>
<dbReference type="SUPFAM" id="SSF82093">
    <property type="entry name" value="Heme chaperone CcmE"/>
    <property type="match status" value="1"/>
</dbReference>